<organism>
    <name type="scientific">Methanococcoides burtonii (strain DSM 6242 / NBRC 107633 / OCM 468 / ACE-M)</name>
    <dbReference type="NCBI Taxonomy" id="259564"/>
    <lineage>
        <taxon>Archaea</taxon>
        <taxon>Methanobacteriati</taxon>
        <taxon>Methanobacteriota</taxon>
        <taxon>Stenosarchaea group</taxon>
        <taxon>Methanomicrobia</taxon>
        <taxon>Methanosarcinales</taxon>
        <taxon>Methanosarcinaceae</taxon>
        <taxon>Methanococcoides</taxon>
    </lineage>
</organism>
<proteinExistence type="inferred from homology"/>
<reference key="1">
    <citation type="journal article" date="2009" name="ISME J.">
        <title>The genome sequence of the psychrophilic archaeon, Methanococcoides burtonii: the role of genome evolution in cold adaptation.</title>
        <authorList>
            <person name="Allen M.A."/>
            <person name="Lauro F.M."/>
            <person name="Williams T.J."/>
            <person name="Burg D."/>
            <person name="Siddiqui K.S."/>
            <person name="De Francisci D."/>
            <person name="Chong K.W."/>
            <person name="Pilak O."/>
            <person name="Chew H.H."/>
            <person name="De Maere M.Z."/>
            <person name="Ting L."/>
            <person name="Katrib M."/>
            <person name="Ng C."/>
            <person name="Sowers K.R."/>
            <person name="Galperin M.Y."/>
            <person name="Anderson I.J."/>
            <person name="Ivanova N."/>
            <person name="Dalin E."/>
            <person name="Martinez M."/>
            <person name="Lapidus A."/>
            <person name="Hauser L."/>
            <person name="Land M."/>
            <person name="Thomas T."/>
            <person name="Cavicchioli R."/>
        </authorList>
    </citation>
    <scope>NUCLEOTIDE SEQUENCE [LARGE SCALE GENOMIC DNA]</scope>
    <source>
        <strain>DSM 6242 / NBRC 107633 / OCM 468 / ACE-M</strain>
    </source>
</reference>
<keyword id="KW-0687">Ribonucleoprotein</keyword>
<keyword id="KW-0689">Ribosomal protein</keyword>
<keyword id="KW-0694">RNA-binding</keyword>
<keyword id="KW-0699">rRNA-binding</keyword>
<feature type="chain" id="PRO_0000263539" description="Small ribosomal subunit protein uS12">
    <location>
        <begin position="1"/>
        <end position="142"/>
    </location>
</feature>
<name>RS12_METBU</name>
<dbReference type="EMBL" id="CP000300">
    <property type="protein sequence ID" value="ABE52096.1"/>
    <property type="molecule type" value="Genomic_DNA"/>
</dbReference>
<dbReference type="RefSeq" id="WP_011499242.1">
    <property type="nucleotide sequence ID" value="NC_007955.1"/>
</dbReference>
<dbReference type="SMR" id="Q12WT0"/>
<dbReference type="STRING" id="259564.Mbur_1173"/>
<dbReference type="GeneID" id="3998460"/>
<dbReference type="KEGG" id="mbu:Mbur_1173"/>
<dbReference type="HOGENOM" id="CLU_115574_0_1_2"/>
<dbReference type="OrthoDB" id="45154at2157"/>
<dbReference type="Proteomes" id="UP000001979">
    <property type="component" value="Chromosome"/>
</dbReference>
<dbReference type="GO" id="GO:0015935">
    <property type="term" value="C:small ribosomal subunit"/>
    <property type="evidence" value="ECO:0007669"/>
    <property type="project" value="InterPro"/>
</dbReference>
<dbReference type="GO" id="GO:0019843">
    <property type="term" value="F:rRNA binding"/>
    <property type="evidence" value="ECO:0007669"/>
    <property type="project" value="UniProtKB-UniRule"/>
</dbReference>
<dbReference type="GO" id="GO:0003735">
    <property type="term" value="F:structural constituent of ribosome"/>
    <property type="evidence" value="ECO:0007669"/>
    <property type="project" value="InterPro"/>
</dbReference>
<dbReference type="GO" id="GO:0006412">
    <property type="term" value="P:translation"/>
    <property type="evidence" value="ECO:0007669"/>
    <property type="project" value="UniProtKB-UniRule"/>
</dbReference>
<dbReference type="CDD" id="cd03367">
    <property type="entry name" value="Ribosomal_S23"/>
    <property type="match status" value="1"/>
</dbReference>
<dbReference type="FunFam" id="2.40.50.140:FF:000007">
    <property type="entry name" value="40S ribosomal protein S23"/>
    <property type="match status" value="1"/>
</dbReference>
<dbReference type="Gene3D" id="2.40.50.140">
    <property type="entry name" value="Nucleic acid-binding proteins"/>
    <property type="match status" value="1"/>
</dbReference>
<dbReference type="HAMAP" id="MF_00403_A">
    <property type="entry name" value="Ribosomal_uS12_A"/>
    <property type="match status" value="1"/>
</dbReference>
<dbReference type="InterPro" id="IPR012340">
    <property type="entry name" value="NA-bd_OB-fold"/>
</dbReference>
<dbReference type="InterPro" id="IPR006032">
    <property type="entry name" value="Ribosomal_uS12"/>
</dbReference>
<dbReference type="InterPro" id="IPR022863">
    <property type="entry name" value="Ribosomal_uS12_arc"/>
</dbReference>
<dbReference type="InterPro" id="IPR005680">
    <property type="entry name" value="Ribosomal_uS12_euk/arc"/>
</dbReference>
<dbReference type="NCBIfam" id="NF003254">
    <property type="entry name" value="PRK04211.1"/>
    <property type="match status" value="1"/>
</dbReference>
<dbReference type="NCBIfam" id="TIGR00982">
    <property type="entry name" value="uS12_E_A"/>
    <property type="match status" value="1"/>
</dbReference>
<dbReference type="PANTHER" id="PTHR11652">
    <property type="entry name" value="30S RIBOSOMAL PROTEIN S12 FAMILY MEMBER"/>
    <property type="match status" value="1"/>
</dbReference>
<dbReference type="Pfam" id="PF00164">
    <property type="entry name" value="Ribosom_S12_S23"/>
    <property type="match status" value="1"/>
</dbReference>
<dbReference type="PIRSF" id="PIRSF002133">
    <property type="entry name" value="Ribosomal_S12/S23"/>
    <property type="match status" value="1"/>
</dbReference>
<dbReference type="SUPFAM" id="SSF50249">
    <property type="entry name" value="Nucleic acid-binding proteins"/>
    <property type="match status" value="1"/>
</dbReference>
<dbReference type="PROSITE" id="PS00055">
    <property type="entry name" value="RIBOSOMAL_S12"/>
    <property type="match status" value="1"/>
</dbReference>
<gene>
    <name evidence="1" type="primary">rps12</name>
    <name type="ordered locus">Mbur_1173</name>
</gene>
<accession>Q12WT0</accession>
<protein>
    <recommendedName>
        <fullName evidence="1">Small ribosomal subunit protein uS12</fullName>
    </recommendedName>
    <alternativeName>
        <fullName evidence="2">30S ribosomal protein S12</fullName>
    </alternativeName>
</protein>
<sequence>MPNGKYAAHRLQQVRKDARWKDTGYSRRTLGLDIKSDPLSGAPQGRGIVLEKVGVEAKQPNSAIRKCVRIQLIKNGRQATAFCPGDGAINFIDEHDEVTVERIGGRMGGAMGDIPGVRFKVIAVNNVSLREMVIGRKEKPRR</sequence>
<comment type="function">
    <text evidence="1">With S4 and S5 plays an important role in translational accuracy. Located at the interface of the 30S and 50S subunits.</text>
</comment>
<comment type="subunit">
    <text evidence="1">Part of the 30S ribosomal subunit.</text>
</comment>
<comment type="similarity">
    <text evidence="1">Belongs to the universal ribosomal protein uS12 family.</text>
</comment>
<evidence type="ECO:0000255" key="1">
    <source>
        <dbReference type="HAMAP-Rule" id="MF_00403"/>
    </source>
</evidence>
<evidence type="ECO:0000305" key="2"/>